<reference key="1">
    <citation type="journal article" date="2006" name="Genome Biol.">
        <title>The genome of Rhizobium leguminosarum has recognizable core and accessory components.</title>
        <authorList>
            <person name="Young J.P.W."/>
            <person name="Crossman L.C."/>
            <person name="Johnston A.W.B."/>
            <person name="Thomson N.R."/>
            <person name="Ghazoui Z.F."/>
            <person name="Hull K.H."/>
            <person name="Wexler M."/>
            <person name="Curson A.R.J."/>
            <person name="Todd J.D."/>
            <person name="Poole P.S."/>
            <person name="Mauchline T.H."/>
            <person name="East A.K."/>
            <person name="Quail M.A."/>
            <person name="Churcher C."/>
            <person name="Arrowsmith C."/>
            <person name="Cherevach I."/>
            <person name="Chillingworth T."/>
            <person name="Clarke K."/>
            <person name="Cronin A."/>
            <person name="Davis P."/>
            <person name="Fraser A."/>
            <person name="Hance Z."/>
            <person name="Hauser H."/>
            <person name="Jagels K."/>
            <person name="Moule S."/>
            <person name="Mungall K."/>
            <person name="Norbertczak H."/>
            <person name="Rabbinowitsch E."/>
            <person name="Sanders M."/>
            <person name="Simmonds M."/>
            <person name="Whitehead S."/>
            <person name="Parkhill J."/>
        </authorList>
    </citation>
    <scope>NUCLEOTIDE SEQUENCE [LARGE SCALE GENOMIC DNA]</scope>
    <source>
        <strain>DSM 114642 / LMG 32736 / 3841</strain>
    </source>
</reference>
<reference key="2">
    <citation type="journal article" date="2009" name="Proc. Natl. Acad. Sci. U.S.A.">
        <title>Legumes regulate Rhizobium bacteroid development and persistence by the supply of branched-chain amino acids.</title>
        <authorList>
            <person name="Prell J."/>
            <person name="White J.P."/>
            <person name="Bourdes A."/>
            <person name="Bunnewell S."/>
            <person name="Bongaerts R.J."/>
            <person name="Poole P.S."/>
        </authorList>
    </citation>
    <scope>DISRUPTION PHENOTYPE</scope>
    <source>
        <strain evidence="3">DSM 114642 / LMG 32736 / 3841</strain>
    </source>
</reference>
<feature type="chain" id="PRO_1000063813" description="3-isopropylmalate dehydratase small subunit">
    <location>
        <begin position="1"/>
        <end position="202"/>
    </location>
</feature>
<proteinExistence type="inferred from homology"/>
<name>LEUD_RHIJ3</name>
<evidence type="ECO:0000255" key="1">
    <source>
        <dbReference type="HAMAP-Rule" id="MF_01031"/>
    </source>
</evidence>
<evidence type="ECO:0000269" key="2">
    <source>
    </source>
</evidence>
<evidence type="ECO:0000303" key="3">
    <source>
    </source>
</evidence>
<gene>
    <name evidence="1" type="primary">leuD</name>
    <name type="ordered locus">RL4705</name>
</gene>
<keyword id="KW-0028">Amino-acid biosynthesis</keyword>
<keyword id="KW-0100">Branched-chain amino acid biosynthesis</keyword>
<keyword id="KW-0432">Leucine biosynthesis</keyword>
<keyword id="KW-0456">Lyase</keyword>
<organism>
    <name type="scientific">Rhizobium johnstonii (strain DSM 114642 / LMG 32736 / 3841)</name>
    <name type="common">Rhizobium leguminosarum bv. viciae</name>
    <dbReference type="NCBI Taxonomy" id="216596"/>
    <lineage>
        <taxon>Bacteria</taxon>
        <taxon>Pseudomonadati</taxon>
        <taxon>Pseudomonadota</taxon>
        <taxon>Alphaproteobacteria</taxon>
        <taxon>Hyphomicrobiales</taxon>
        <taxon>Rhizobiaceae</taxon>
        <taxon>Rhizobium/Agrobacterium group</taxon>
        <taxon>Rhizobium</taxon>
        <taxon>Rhizobium johnstonii</taxon>
    </lineage>
</organism>
<comment type="function">
    <text evidence="1">Catalyzes the isomerization between 2-isopropylmalate and 3-isopropylmalate, via the formation of 2-isopropylmaleate.</text>
</comment>
<comment type="catalytic activity">
    <reaction evidence="1">
        <text>(2R,3S)-3-isopropylmalate = (2S)-2-isopropylmalate</text>
        <dbReference type="Rhea" id="RHEA:32287"/>
        <dbReference type="ChEBI" id="CHEBI:1178"/>
        <dbReference type="ChEBI" id="CHEBI:35121"/>
        <dbReference type="EC" id="4.2.1.33"/>
    </reaction>
</comment>
<comment type="pathway">
    <text evidence="1">Amino-acid biosynthesis; L-leucine biosynthesis; L-leucine from 3-methyl-2-oxobutanoate: step 2/4.</text>
</comment>
<comment type="subunit">
    <text evidence="1">Heterodimer of LeuC and LeuD.</text>
</comment>
<comment type="disruption phenotype">
    <text evidence="2">Nodulates the roots of pea plants as long as branched-chain amino acids Leu, Ile and Val (LIV) are added to the plant growth medium, but forms fewer nodules compared to wild-type. Nodules infected by the mutant are more spherical and contain more starch than those infected with wild-type, however the bacteroids appear visually normal.</text>
</comment>
<comment type="similarity">
    <text evidence="1">Belongs to the LeuD family. LeuD type 1 subfamily.</text>
</comment>
<protein>
    <recommendedName>
        <fullName evidence="1">3-isopropylmalate dehydratase small subunit</fullName>
        <ecNumber evidence="1">4.2.1.33</ecNumber>
    </recommendedName>
    <alternativeName>
        <fullName evidence="1">Alpha-IPM isomerase</fullName>
        <shortName evidence="1">IPMI</shortName>
    </alternativeName>
    <alternativeName>
        <fullName evidence="1">Isopropylmalate isomerase</fullName>
    </alternativeName>
</protein>
<dbReference type="EC" id="4.2.1.33" evidence="1"/>
<dbReference type="EMBL" id="AM236080">
    <property type="protein sequence ID" value="CAK10188.1"/>
    <property type="molecule type" value="Genomic_DNA"/>
</dbReference>
<dbReference type="RefSeq" id="WP_003543984.1">
    <property type="nucleotide sequence ID" value="NC_008380.1"/>
</dbReference>
<dbReference type="SMR" id="Q1MA52"/>
<dbReference type="EnsemblBacteria" id="CAK10188">
    <property type="protein sequence ID" value="CAK10188"/>
    <property type="gene ID" value="RL4705"/>
</dbReference>
<dbReference type="GeneID" id="84672358"/>
<dbReference type="KEGG" id="rle:RL4705"/>
<dbReference type="eggNOG" id="COG0066">
    <property type="taxonomic scope" value="Bacteria"/>
</dbReference>
<dbReference type="HOGENOM" id="CLU_081378_0_3_5"/>
<dbReference type="UniPathway" id="UPA00048">
    <property type="reaction ID" value="UER00071"/>
</dbReference>
<dbReference type="Proteomes" id="UP000006575">
    <property type="component" value="Chromosome"/>
</dbReference>
<dbReference type="GO" id="GO:0009316">
    <property type="term" value="C:3-isopropylmalate dehydratase complex"/>
    <property type="evidence" value="ECO:0007669"/>
    <property type="project" value="InterPro"/>
</dbReference>
<dbReference type="GO" id="GO:0003861">
    <property type="term" value="F:3-isopropylmalate dehydratase activity"/>
    <property type="evidence" value="ECO:0007669"/>
    <property type="project" value="UniProtKB-UniRule"/>
</dbReference>
<dbReference type="GO" id="GO:0009098">
    <property type="term" value="P:L-leucine biosynthetic process"/>
    <property type="evidence" value="ECO:0007669"/>
    <property type="project" value="UniProtKB-UniRule"/>
</dbReference>
<dbReference type="CDD" id="cd01577">
    <property type="entry name" value="IPMI_Swivel"/>
    <property type="match status" value="1"/>
</dbReference>
<dbReference type="FunFam" id="3.20.19.10:FF:000003">
    <property type="entry name" value="3-isopropylmalate dehydratase small subunit"/>
    <property type="match status" value="1"/>
</dbReference>
<dbReference type="Gene3D" id="3.20.19.10">
    <property type="entry name" value="Aconitase, domain 4"/>
    <property type="match status" value="1"/>
</dbReference>
<dbReference type="HAMAP" id="MF_01031">
    <property type="entry name" value="LeuD_type1"/>
    <property type="match status" value="1"/>
</dbReference>
<dbReference type="InterPro" id="IPR004431">
    <property type="entry name" value="3-IsopropMal_deHydase_ssu"/>
</dbReference>
<dbReference type="InterPro" id="IPR015928">
    <property type="entry name" value="Aconitase/3IPM_dehydase_swvl"/>
</dbReference>
<dbReference type="InterPro" id="IPR000573">
    <property type="entry name" value="AconitaseA/IPMdHydase_ssu_swvl"/>
</dbReference>
<dbReference type="InterPro" id="IPR033940">
    <property type="entry name" value="IPMI_Swivel"/>
</dbReference>
<dbReference type="InterPro" id="IPR050075">
    <property type="entry name" value="LeuD"/>
</dbReference>
<dbReference type="NCBIfam" id="TIGR00171">
    <property type="entry name" value="leuD"/>
    <property type="match status" value="1"/>
</dbReference>
<dbReference type="NCBIfam" id="NF002458">
    <property type="entry name" value="PRK01641.1"/>
    <property type="match status" value="1"/>
</dbReference>
<dbReference type="PANTHER" id="PTHR43345:SF5">
    <property type="entry name" value="3-ISOPROPYLMALATE DEHYDRATASE SMALL SUBUNIT"/>
    <property type="match status" value="1"/>
</dbReference>
<dbReference type="PANTHER" id="PTHR43345">
    <property type="entry name" value="3-ISOPROPYLMALATE DEHYDRATASE SMALL SUBUNIT 2-RELATED-RELATED"/>
    <property type="match status" value="1"/>
</dbReference>
<dbReference type="Pfam" id="PF00694">
    <property type="entry name" value="Aconitase_C"/>
    <property type="match status" value="1"/>
</dbReference>
<dbReference type="SUPFAM" id="SSF52016">
    <property type="entry name" value="LeuD/IlvD-like"/>
    <property type="match status" value="1"/>
</dbReference>
<sequence length="202" mass="22127">MDKFVKLTGVAAPLPVVNVDTDMIIPKDYLKTIKRTGLGTGLFAEARYNEDGSENPDFVLNKPAYRDAKILVAGDNFGCGSSREHAPWALLDFGIRCVISTSFADIFYNNCFKNGILPIKVSQEDLDKLMDDASRGSNAILTVDLENLEITGPDGGLIKFDLDEFKRHCLLNGLDDIGLTLEKGKAIDSFEKKNAASHPWAA</sequence>
<accession>Q1MA52</accession>